<protein>
    <recommendedName>
        <fullName evidence="1">Ion-translocating oxidoreductase complex subunit C</fullName>
        <ecNumber evidence="1">7.-.-.-</ecNumber>
    </recommendedName>
    <alternativeName>
        <fullName evidence="1">Rsx electron transport complex subunit C</fullName>
    </alternativeName>
</protein>
<gene>
    <name evidence="1" type="primary">rsxC</name>
    <name type="synonym">rnfC</name>
    <name type="ordered locus">UTI89_C1819</name>
</gene>
<keyword id="KW-0004">4Fe-4S</keyword>
<keyword id="KW-0997">Cell inner membrane</keyword>
<keyword id="KW-1003">Cell membrane</keyword>
<keyword id="KW-0249">Electron transport</keyword>
<keyword id="KW-0408">Iron</keyword>
<keyword id="KW-0411">Iron-sulfur</keyword>
<keyword id="KW-0472">Membrane</keyword>
<keyword id="KW-0479">Metal-binding</keyword>
<keyword id="KW-0677">Repeat</keyword>
<keyword id="KW-1278">Translocase</keyword>
<keyword id="KW-0813">Transport</keyword>
<organism>
    <name type="scientific">Escherichia coli (strain UTI89 / UPEC)</name>
    <dbReference type="NCBI Taxonomy" id="364106"/>
    <lineage>
        <taxon>Bacteria</taxon>
        <taxon>Pseudomonadati</taxon>
        <taxon>Pseudomonadota</taxon>
        <taxon>Gammaproteobacteria</taxon>
        <taxon>Enterobacterales</taxon>
        <taxon>Enterobacteriaceae</taxon>
        <taxon>Escherichia</taxon>
    </lineage>
</organism>
<comment type="function">
    <text evidence="1">Part of a membrane-bound complex that couples electron transfer with translocation of ions across the membrane. Required to maintain the reduced state of SoxR.</text>
</comment>
<comment type="cofactor">
    <cofactor evidence="1">
        <name>[4Fe-4S] cluster</name>
        <dbReference type="ChEBI" id="CHEBI:49883"/>
    </cofactor>
    <text evidence="1">Binds 2 [4Fe-4S] clusters per subunit.</text>
</comment>
<comment type="subunit">
    <text evidence="1">The complex is composed of six subunits: RsxA, RsxB, RsxC, RsxD, RsxE and RsxG.</text>
</comment>
<comment type="subcellular location">
    <subcellularLocation>
        <location evidence="1">Cell inner membrane</location>
        <topology evidence="1">Peripheral membrane protein</topology>
    </subcellularLocation>
</comment>
<comment type="similarity">
    <text evidence="1">Belongs to the 4Fe4S bacterial-type ferredoxin family. RnfC subfamily.</text>
</comment>
<evidence type="ECO:0000255" key="1">
    <source>
        <dbReference type="HAMAP-Rule" id="MF_00461"/>
    </source>
</evidence>
<evidence type="ECO:0000256" key="2">
    <source>
        <dbReference type="SAM" id="MobiDB-lite"/>
    </source>
</evidence>
<proteinExistence type="inferred from homology"/>
<name>RSXC_ECOUT</name>
<feature type="chain" id="PRO_1000013604" description="Ion-translocating oxidoreductase complex subunit C">
    <location>
        <begin position="1"/>
        <end position="708"/>
    </location>
</feature>
<feature type="domain" description="4Fe-4S ferredoxin-type 1" evidence="1">
    <location>
        <begin position="369"/>
        <end position="397"/>
    </location>
</feature>
<feature type="domain" description="4Fe-4S ferredoxin-type 2" evidence="1">
    <location>
        <begin position="407"/>
        <end position="436"/>
    </location>
</feature>
<feature type="region of interest" description="Disordered" evidence="2">
    <location>
        <begin position="630"/>
        <end position="682"/>
    </location>
</feature>
<feature type="binding site" evidence="1">
    <location>
        <position position="377"/>
    </location>
    <ligand>
        <name>[4Fe-4S] cluster</name>
        <dbReference type="ChEBI" id="CHEBI:49883"/>
        <label>1</label>
    </ligand>
</feature>
<feature type="binding site" evidence="1">
    <location>
        <position position="380"/>
    </location>
    <ligand>
        <name>[4Fe-4S] cluster</name>
        <dbReference type="ChEBI" id="CHEBI:49883"/>
        <label>1</label>
    </ligand>
</feature>
<feature type="binding site" evidence="1">
    <location>
        <position position="383"/>
    </location>
    <ligand>
        <name>[4Fe-4S] cluster</name>
        <dbReference type="ChEBI" id="CHEBI:49883"/>
        <label>1</label>
    </ligand>
</feature>
<feature type="binding site" evidence="1">
    <location>
        <position position="387"/>
    </location>
    <ligand>
        <name>[4Fe-4S] cluster</name>
        <dbReference type="ChEBI" id="CHEBI:49883"/>
        <label>2</label>
    </ligand>
</feature>
<feature type="binding site" evidence="1">
    <location>
        <position position="416"/>
    </location>
    <ligand>
        <name>[4Fe-4S] cluster</name>
        <dbReference type="ChEBI" id="CHEBI:49883"/>
        <label>2</label>
    </ligand>
</feature>
<feature type="binding site" evidence="1">
    <location>
        <position position="419"/>
    </location>
    <ligand>
        <name>[4Fe-4S] cluster</name>
        <dbReference type="ChEBI" id="CHEBI:49883"/>
        <label>2</label>
    </ligand>
</feature>
<feature type="binding site" evidence="1">
    <location>
        <position position="422"/>
    </location>
    <ligand>
        <name>[4Fe-4S] cluster</name>
        <dbReference type="ChEBI" id="CHEBI:49883"/>
        <label>2</label>
    </ligand>
</feature>
<feature type="binding site" evidence="1">
    <location>
        <position position="426"/>
    </location>
    <ligand>
        <name>[4Fe-4S] cluster</name>
        <dbReference type="ChEBI" id="CHEBI:49883"/>
        <label>1</label>
    </ligand>
</feature>
<dbReference type="EC" id="7.-.-.-" evidence="1"/>
<dbReference type="EMBL" id="CP000243">
    <property type="protein sequence ID" value="ABE07297.1"/>
    <property type="molecule type" value="Genomic_DNA"/>
</dbReference>
<dbReference type="RefSeq" id="WP_000915721.1">
    <property type="nucleotide sequence ID" value="NZ_CP064825.1"/>
</dbReference>
<dbReference type="SMR" id="Q1RBG7"/>
<dbReference type="KEGG" id="eci:UTI89_C1819"/>
<dbReference type="HOGENOM" id="CLU_010808_2_1_6"/>
<dbReference type="Proteomes" id="UP000001952">
    <property type="component" value="Chromosome"/>
</dbReference>
<dbReference type="GO" id="GO:0005886">
    <property type="term" value="C:plasma membrane"/>
    <property type="evidence" value="ECO:0007669"/>
    <property type="project" value="UniProtKB-SubCell"/>
</dbReference>
<dbReference type="GO" id="GO:0051539">
    <property type="term" value="F:4 iron, 4 sulfur cluster binding"/>
    <property type="evidence" value="ECO:0007669"/>
    <property type="project" value="UniProtKB-KW"/>
</dbReference>
<dbReference type="GO" id="GO:0009055">
    <property type="term" value="F:electron transfer activity"/>
    <property type="evidence" value="ECO:0007669"/>
    <property type="project" value="InterPro"/>
</dbReference>
<dbReference type="GO" id="GO:0046872">
    <property type="term" value="F:metal ion binding"/>
    <property type="evidence" value="ECO:0007669"/>
    <property type="project" value="UniProtKB-KW"/>
</dbReference>
<dbReference type="GO" id="GO:0022900">
    <property type="term" value="P:electron transport chain"/>
    <property type="evidence" value="ECO:0007669"/>
    <property type="project" value="UniProtKB-UniRule"/>
</dbReference>
<dbReference type="Gene3D" id="3.30.70.20">
    <property type="match status" value="1"/>
</dbReference>
<dbReference type="Gene3D" id="3.40.50.11540">
    <property type="entry name" value="NADH-ubiquinone oxidoreductase 51kDa subunit"/>
    <property type="match status" value="1"/>
</dbReference>
<dbReference type="HAMAP" id="MF_00461">
    <property type="entry name" value="RsxC_RnfC"/>
    <property type="match status" value="1"/>
</dbReference>
<dbReference type="InterPro" id="IPR017896">
    <property type="entry name" value="4Fe4S_Fe-S-bd"/>
</dbReference>
<dbReference type="InterPro" id="IPR017900">
    <property type="entry name" value="4Fe4S_Fe_S_CS"/>
</dbReference>
<dbReference type="InterPro" id="IPR010208">
    <property type="entry name" value="Ion_transpt_RnfC/RsxC"/>
</dbReference>
<dbReference type="InterPro" id="IPR011538">
    <property type="entry name" value="Nuo51_FMN-bd"/>
</dbReference>
<dbReference type="InterPro" id="IPR037225">
    <property type="entry name" value="Nuo51_FMN-bd_sf"/>
</dbReference>
<dbReference type="InterPro" id="IPR026902">
    <property type="entry name" value="RnfC_N"/>
</dbReference>
<dbReference type="InterPro" id="IPR019554">
    <property type="entry name" value="Soluble_ligand-bd"/>
</dbReference>
<dbReference type="NCBIfam" id="NF003454">
    <property type="entry name" value="PRK05035.1"/>
    <property type="match status" value="1"/>
</dbReference>
<dbReference type="NCBIfam" id="TIGR01945">
    <property type="entry name" value="rnfC"/>
    <property type="match status" value="1"/>
</dbReference>
<dbReference type="PANTHER" id="PTHR43034">
    <property type="entry name" value="ION-TRANSLOCATING OXIDOREDUCTASE COMPLEX SUBUNIT C"/>
    <property type="match status" value="1"/>
</dbReference>
<dbReference type="PANTHER" id="PTHR43034:SF2">
    <property type="entry name" value="ION-TRANSLOCATING OXIDOREDUCTASE COMPLEX SUBUNIT C"/>
    <property type="match status" value="1"/>
</dbReference>
<dbReference type="Pfam" id="PF01512">
    <property type="entry name" value="Complex1_51K"/>
    <property type="match status" value="1"/>
</dbReference>
<dbReference type="Pfam" id="PF12838">
    <property type="entry name" value="Fer4_7"/>
    <property type="match status" value="1"/>
</dbReference>
<dbReference type="Pfam" id="PF13375">
    <property type="entry name" value="RnfC_N"/>
    <property type="match status" value="1"/>
</dbReference>
<dbReference type="Pfam" id="PF10531">
    <property type="entry name" value="SLBB"/>
    <property type="match status" value="1"/>
</dbReference>
<dbReference type="SUPFAM" id="SSF46548">
    <property type="entry name" value="alpha-helical ferredoxin"/>
    <property type="match status" value="1"/>
</dbReference>
<dbReference type="SUPFAM" id="SSF142019">
    <property type="entry name" value="Nqo1 FMN-binding domain-like"/>
    <property type="match status" value="1"/>
</dbReference>
<dbReference type="PROSITE" id="PS00198">
    <property type="entry name" value="4FE4S_FER_1"/>
    <property type="match status" value="2"/>
</dbReference>
<dbReference type="PROSITE" id="PS51379">
    <property type="entry name" value="4FE4S_FER_2"/>
    <property type="match status" value="2"/>
</dbReference>
<reference key="1">
    <citation type="journal article" date="2006" name="Proc. Natl. Acad. Sci. U.S.A.">
        <title>Identification of genes subject to positive selection in uropathogenic strains of Escherichia coli: a comparative genomics approach.</title>
        <authorList>
            <person name="Chen S.L."/>
            <person name="Hung C.-S."/>
            <person name="Xu J."/>
            <person name="Reigstad C.S."/>
            <person name="Magrini V."/>
            <person name="Sabo A."/>
            <person name="Blasiar D."/>
            <person name="Bieri T."/>
            <person name="Meyer R.R."/>
            <person name="Ozersky P."/>
            <person name="Armstrong J.R."/>
            <person name="Fulton R.S."/>
            <person name="Latreille J.P."/>
            <person name="Spieth J."/>
            <person name="Hooton T.M."/>
            <person name="Mardis E.R."/>
            <person name="Hultgren S.J."/>
            <person name="Gordon J.I."/>
        </authorList>
    </citation>
    <scope>NUCLEOTIDE SEQUENCE [LARGE SCALE GENOMIC DNA]</scope>
    <source>
        <strain>UTI89 / UPEC</strain>
    </source>
</reference>
<accession>Q1RBG7</accession>
<sequence length="708" mass="76786">MLKLFSAFRKNKIWDFNGGIHPPEMKTQSNGTPLRQVPLAQRFVIPLKQHIGAEGELCVSVGDKVLRGQPLTRGRGKMLPVHAPTSGTVTAIAPHSTAHPSALAELSVIIDADGEDCWIPRDGWADYRSRSREELIERIHQFGVAGLGGAGFPTGVKLQGGGDKIETLIINAAECEPYITADDRLMQDCAAQVVEGIRILAHILQPREILIGIEDNKPQAISMLRAVLADSHDISLRVIPTKYPSGGAKQLTYILTGKQVPHGGRSSDIGVLMQNVGTAYAVKRAVIDGEPITERVVTLTGEAIARPGNVWARLGTPVRHLLNDAGFCPSADQMVIMGGPLMGFTLPWLDVPVVKITNCLLAPSANELGEPQEEQSCIRCSACADACPADLLPQQLYWFSKGQQHDKATTHNIADCIECGACAWVCPSNIPLVQYFRQEKAEIAAIRQEEKRAAEAKARFEARQARLEREKAARLERHKSAAVQPAAKDKDAIAAALARVKEKQAQATQPIVIKAGERPDNSAIIAAREARKAQARAKQAELQQTNDAATVADPRKTAVEAAIARAKARKLEQQQANAEPEEQIDPRKAAVEAAIARAKARKLEQQQANAEPEEQIDPRKAAVEAAIARAKARKLEQQQANAEPEEQIDPRKAAVEAAIARAKARKLEQQQANAEPEEQIDPRKAAVAAAIARVQAKKAAQQKVVNED</sequence>